<gene>
    <name type="primary">Ppp5c</name>
</gene>
<keyword id="KW-0007">Acetylation</keyword>
<keyword id="KW-1003">Cell membrane</keyword>
<keyword id="KW-0963">Cytoplasm</keyword>
<keyword id="KW-0378">Hydrolase</keyword>
<keyword id="KW-0460">Magnesium</keyword>
<keyword id="KW-0464">Manganese</keyword>
<keyword id="KW-0472">Membrane</keyword>
<keyword id="KW-0479">Metal-binding</keyword>
<keyword id="KW-0539">Nucleus</keyword>
<keyword id="KW-0904">Protein phosphatase</keyword>
<keyword id="KW-1185">Reference proteome</keyword>
<keyword id="KW-0677">Repeat</keyword>
<keyword id="KW-0802">TPR repeat</keyword>
<sequence length="499" mass="56877">MAMAEGERTECAETPRDEPPADGTLKRAEELKTQANDYFKAKDYENAIKFYSQAIELNPGNAIYYGNRSLAYLRTECYGYALGDATRAIELDKKYIKGYYRRAASNMALGKFRAALRDYETVVKVKPNDKDAKMKYQECSKIVKQKAFERAIAGDEHRRSVVDSLDIESMTIEDEYSGPKLEDGKVTITFMKDLMQWYKDQKKLHRKCAYQILVQVKEVLCKLSTLVETTLKETEKITVCGDTHGQFYDLLNIFELNGLPSETNPYIFNGDFVDRGSFSVEVILTLFGFKLLYPDHFHLLRGNHETDNMNQIYGFEGEVKAKYTAQMYELFSEVFEWLPLAQCINGKVLIMHGGLFSEDGVTLDDIRKIERNRQPPDSGPMCDLLWSDPQPQNGRSVSKRGVSCQFGPDVTKAFLEENQLDYIIRSHEVKAEGYEVAHGGRCVTVFSAPNYCDQMGNKASYIHLQGSDLRPQFHQFTAVPHPNVKPMAYANTLLQLGMM</sequence>
<reference key="1">
    <citation type="submission" date="1997-08" db="EMBL/GenBank/DDBJ databases">
        <authorList>
            <person name="Ollendorff V."/>
            <person name="Donoghue D.J."/>
        </authorList>
    </citation>
    <scope>NUCLEOTIDE SEQUENCE [MRNA]</scope>
</reference>
<reference key="2">
    <citation type="journal article" date="2009" name="PLoS Biol.">
        <title>Lineage-specific biology revealed by a finished genome assembly of the mouse.</title>
        <authorList>
            <person name="Church D.M."/>
            <person name="Goodstadt L."/>
            <person name="Hillier L.W."/>
            <person name="Zody M.C."/>
            <person name="Goldstein S."/>
            <person name="She X."/>
            <person name="Bult C.J."/>
            <person name="Agarwala R."/>
            <person name="Cherry J.L."/>
            <person name="DiCuccio M."/>
            <person name="Hlavina W."/>
            <person name="Kapustin Y."/>
            <person name="Meric P."/>
            <person name="Maglott D."/>
            <person name="Birtle Z."/>
            <person name="Marques A.C."/>
            <person name="Graves T."/>
            <person name="Zhou S."/>
            <person name="Teague B."/>
            <person name="Potamousis K."/>
            <person name="Churas C."/>
            <person name="Place M."/>
            <person name="Herschleb J."/>
            <person name="Runnheim R."/>
            <person name="Forrest D."/>
            <person name="Amos-Landgraf J."/>
            <person name="Schwartz D.C."/>
            <person name="Cheng Z."/>
            <person name="Lindblad-Toh K."/>
            <person name="Eichler E.E."/>
            <person name="Ponting C.P."/>
        </authorList>
    </citation>
    <scope>NUCLEOTIDE SEQUENCE [LARGE SCALE GENOMIC DNA]</scope>
    <source>
        <strain>C57BL/6J</strain>
    </source>
</reference>
<reference key="3">
    <citation type="submission" date="2005-09" db="EMBL/GenBank/DDBJ databases">
        <authorList>
            <person name="Mural R.J."/>
            <person name="Adams M.D."/>
            <person name="Myers E.W."/>
            <person name="Smith H.O."/>
            <person name="Venter J.C."/>
        </authorList>
    </citation>
    <scope>NUCLEOTIDE SEQUENCE [LARGE SCALE GENOMIC DNA]</scope>
</reference>
<reference key="4">
    <citation type="journal article" date="2004" name="Genome Res.">
        <title>The status, quality, and expansion of the NIH full-length cDNA project: the Mammalian Gene Collection (MGC).</title>
        <authorList>
            <consortium name="The MGC Project Team"/>
        </authorList>
    </citation>
    <scope>NUCLEOTIDE SEQUENCE [LARGE SCALE MRNA]</scope>
</reference>
<reference key="5">
    <citation type="journal article" date="1994" name="Proc. Natl. Acad. Sci. U.S.A.">
        <title>Targeting of a distinctive protein-serine phosphatase to the protein kinase-like domain of the atrial natriuretic peptide receptor.</title>
        <authorList>
            <person name="Chinkers M."/>
        </authorList>
    </citation>
    <scope>NUCLEOTIDE SEQUENCE [MRNA] OF 12-155</scope>
</reference>
<reference key="6">
    <citation type="journal article" date="1997" name="J. Biol. Chem.">
        <title>Protein phosphatase 5 is a major component of glucocorticoid receptor.hsp90 complexes with properties of an FK506-binding immunophilin.</title>
        <authorList>
            <person name="Silverstein A.M."/>
            <person name="Galigniana M.D."/>
            <person name="Chen M.S."/>
            <person name="Owens-Grillo J.K."/>
            <person name="Chinkers M."/>
            <person name="Pratt W.B."/>
        </authorList>
    </citation>
    <scope>IDENTIFICATION IN A COMPLEX WITH HSP90AA1 AND NR3C1</scope>
</reference>
<reference key="7">
    <citation type="journal article" date="2003" name="J. Biol. Chem.">
        <title>Identification of targets for calcium signaling through the copine family of proteins. Characterization of a coiled-coil copine-binding motif.</title>
        <authorList>
            <person name="Tomsig J.L."/>
            <person name="Snyder S.L."/>
            <person name="Creutz C.E."/>
        </authorList>
    </citation>
    <scope>INTERACTION WITH CPNE1</scope>
</reference>
<reference key="8">
    <citation type="journal article" date="2006" name="Proc. Natl. Acad. Sci. U.S.A.">
        <title>Posttranslational regulation of the mammalian circadian clock by cryptochrome and protein phosphatase 5.</title>
        <authorList>
            <person name="Partch C.L."/>
            <person name="Shields K.F."/>
            <person name="Thompson C.L."/>
            <person name="Selby C.P."/>
            <person name="Sancar A."/>
        </authorList>
    </citation>
    <scope>TISSUE SPECIFICITY</scope>
    <scope>INDUCTION</scope>
</reference>
<reference key="9">
    <citation type="journal article" date="2007" name="J. Biol. Chem.">
        <title>Mice lacking protein phosphatase 5 are defective in ataxia telangiectasia mutated (ATM)-mediated cell cycle arrest.</title>
        <authorList>
            <person name="Yong W."/>
            <person name="Bao S."/>
            <person name="Chen H."/>
            <person name="Li D."/>
            <person name="Sanchez E.R."/>
            <person name="Shou W."/>
        </authorList>
    </citation>
    <scope>FUNCTION IN DNA DAMAGE RESPONSE</scope>
    <scope>DISRUPTION PHENOTYPE</scope>
</reference>
<reference key="10">
    <citation type="journal article" date="2010" name="Cell">
        <title>A tissue-specific atlas of mouse protein phosphorylation and expression.</title>
        <authorList>
            <person name="Huttlin E.L."/>
            <person name="Jedrychowski M.P."/>
            <person name="Elias J.E."/>
            <person name="Goswami T."/>
            <person name="Rad R."/>
            <person name="Beausoleil S.A."/>
            <person name="Villen J."/>
            <person name="Haas W."/>
            <person name="Sowa M.E."/>
            <person name="Gygi S.P."/>
        </authorList>
    </citation>
    <scope>IDENTIFICATION BY MASS SPECTROMETRY [LARGE SCALE ANALYSIS]</scope>
    <source>
        <tissue>Brain</tissue>
        <tissue>Brown adipose tissue</tissue>
        <tissue>Heart</tissue>
        <tissue>Kidney</tissue>
        <tissue>Liver</tissue>
        <tissue>Lung</tissue>
        <tissue>Pancreas</tissue>
        <tissue>Spleen</tissue>
        <tissue>Testis</tissue>
    </source>
</reference>
<reference key="11">
    <citation type="journal article" date="2011" name="J. Biol. Chem.">
        <title>Protein phosphatase 5 mediates lipid metabolism through reciprocal control of glucocorticoid receptor and peroxisome proliferator-activated receptor-? (PPAR?).</title>
        <authorList>
            <person name="Hinds T.D. Jr."/>
            <person name="Stechschulte L.A."/>
            <person name="Cash H.A."/>
            <person name="Whisler D."/>
            <person name="Banerjee A."/>
            <person name="Yong W."/>
            <person name="Khuder S.S."/>
            <person name="Kaw M.K."/>
            <person name="Shou W."/>
            <person name="Najjar S.M."/>
            <person name="Sanchez E.R."/>
        </authorList>
    </citation>
    <scope>FUNCTION IN DEPHOSPHORYLATION OF NR3C1 AND PPARG</scope>
    <scope>INTERACTION WITH NR3C1 AND PPARG</scope>
    <scope>SUBCELLULAR LOCATION</scope>
</reference>
<reference key="12">
    <citation type="journal article" date="2012" name="Diabetologia">
        <title>Serine/threonine protein phosphatase 5 regulates glucose homeostasis in vivo and apoptosis signalling in mouse pancreatic islets and clonal MIN6 cells.</title>
        <authorList>
            <person name="Grankvist N."/>
            <person name="Amable L."/>
            <person name="Honkanen R.E."/>
            <person name="Sjoeholm A."/>
            <person name="Ortsaeter H."/>
        </authorList>
    </citation>
    <scope>FUNCTION IN GLUCOSE HOMEOSTASIS</scope>
    <scope>DISRUPTION PHENOTYPE</scope>
</reference>
<proteinExistence type="evidence at protein level"/>
<organism>
    <name type="scientific">Mus musculus</name>
    <name type="common">Mouse</name>
    <dbReference type="NCBI Taxonomy" id="10090"/>
    <lineage>
        <taxon>Eukaryota</taxon>
        <taxon>Metazoa</taxon>
        <taxon>Chordata</taxon>
        <taxon>Craniata</taxon>
        <taxon>Vertebrata</taxon>
        <taxon>Euteleostomi</taxon>
        <taxon>Mammalia</taxon>
        <taxon>Eutheria</taxon>
        <taxon>Euarchontoglires</taxon>
        <taxon>Glires</taxon>
        <taxon>Rodentia</taxon>
        <taxon>Myomorpha</taxon>
        <taxon>Muroidea</taxon>
        <taxon>Muridae</taxon>
        <taxon>Murinae</taxon>
        <taxon>Mus</taxon>
        <taxon>Mus</taxon>
    </lineage>
</organism>
<accession>Q60676</accession>
<accession>G5E819</accession>
<accession>O35299</accession>
<evidence type="ECO:0000250" key="1"/>
<evidence type="ECO:0000250" key="2">
    <source>
        <dbReference type="UniProtKB" id="P53041"/>
    </source>
</evidence>
<evidence type="ECO:0000250" key="3">
    <source>
        <dbReference type="UniProtKB" id="P53042"/>
    </source>
</evidence>
<evidence type="ECO:0000256" key="4">
    <source>
        <dbReference type="SAM" id="MobiDB-lite"/>
    </source>
</evidence>
<evidence type="ECO:0000269" key="5">
    <source>
    </source>
</evidence>
<evidence type="ECO:0000269" key="6">
    <source>
    </source>
</evidence>
<evidence type="ECO:0000269" key="7">
    <source>
    </source>
</evidence>
<evidence type="ECO:0000269" key="8">
    <source>
    </source>
</evidence>
<evidence type="ECO:0000269" key="9">
    <source>
    </source>
</evidence>
<evidence type="ECO:0000269" key="10">
    <source>
    </source>
</evidence>
<evidence type="ECO:0000305" key="11"/>
<comment type="function">
    <text evidence="2 3 7 8 9">Serine/threonine-protein phosphatase that dephosphorylates a myriad of proteins involved in different signaling pathways including the kinases CSNK1E, ASK1/MAP3K5, PRKDC and RAF1, the nuclear receptors NR3C1, PPARG, ESR1 and ESR2, SMAD proteins and TAU/MAPT (PubMed:17376776, PubMed:21994940, PubMed:22526606). Implicated in wide ranging cellular processes, including apoptosis, differentiation, DNA damage response, cell survival, regulation of ion channels or circadian rhythms, in response to steroid and thyroid hormones, calcium, fatty acids, TGF-beta as well as oxidative and genotoxic stresses (By similarity). Participates in the control of DNA damage response mechanisms such as checkpoint activation and DNA damage repair through, for instance, the regulation ATM/ATR-signaling and dephosphorylation of PRKDC and TP53BP1 (PubMed:17376776). Inhibits ASK1/MAP3K5-mediated apoptosis induced by oxidative stress (By similarity). Plays a positive role in adipogenesis, mainly through the dephosphorylation and activation of PPARG transactivation function (PubMed:21994940). Also dephosphorylates and inhibits the anti-adipogenic effect of NR3C1 (PubMed:21994940). Regulates the circadian rhythms, through the dephosphorylation and activation of CSNK1E. May modulate TGF-beta signaling pathway by the regulation of SMAD3 phosphorylation and protein expression levels. Dephosphorylates and may play a role in the regulation of TAU/MAPT (By similarity). Through their dephosphorylation, may play a role in the regulation of ions channels such as KCNH2 (By similarity). Dephosphorylate FNIP1, disrupting interaction with HSP90AA1/Hsp90 (By similarity).</text>
</comment>
<comment type="catalytic activity">
    <reaction evidence="8">
        <text>O-phospho-L-seryl-[protein] + H2O = L-seryl-[protein] + phosphate</text>
        <dbReference type="Rhea" id="RHEA:20629"/>
        <dbReference type="Rhea" id="RHEA-COMP:9863"/>
        <dbReference type="Rhea" id="RHEA-COMP:11604"/>
        <dbReference type="ChEBI" id="CHEBI:15377"/>
        <dbReference type="ChEBI" id="CHEBI:29999"/>
        <dbReference type="ChEBI" id="CHEBI:43474"/>
        <dbReference type="ChEBI" id="CHEBI:83421"/>
        <dbReference type="EC" id="3.1.3.16"/>
    </reaction>
    <physiologicalReaction direction="left-to-right" evidence="8">
        <dbReference type="Rhea" id="RHEA:20630"/>
    </physiologicalReaction>
</comment>
<comment type="catalytic activity">
    <reaction evidence="8">
        <text>O-phospho-L-threonyl-[protein] + H2O = L-threonyl-[protein] + phosphate</text>
        <dbReference type="Rhea" id="RHEA:47004"/>
        <dbReference type="Rhea" id="RHEA-COMP:11060"/>
        <dbReference type="Rhea" id="RHEA-COMP:11605"/>
        <dbReference type="ChEBI" id="CHEBI:15377"/>
        <dbReference type="ChEBI" id="CHEBI:30013"/>
        <dbReference type="ChEBI" id="CHEBI:43474"/>
        <dbReference type="ChEBI" id="CHEBI:61977"/>
        <dbReference type="EC" id="3.1.3.16"/>
    </reaction>
    <physiologicalReaction direction="left-to-right" evidence="8">
        <dbReference type="Rhea" id="RHEA:47005"/>
    </physiologicalReaction>
</comment>
<comment type="cofactor">
    <cofactor evidence="1">
        <name>Mg(2+)</name>
        <dbReference type="ChEBI" id="CHEBI:18420"/>
    </cofactor>
    <cofactor evidence="1">
        <name>Mn(2+)</name>
        <dbReference type="ChEBI" id="CHEBI:29035"/>
    </cofactor>
    <text evidence="1">Binds 2 Mg(2+) or Mn(2+) cations per subunit.</text>
</comment>
<comment type="activity regulation">
    <text>Autoinhibited. In the autoinhibited state, the TPR domain interacts with the catalytic region and prevents substrate access to the catalytic pocket. Allosterically activated by various polyunsaturated fatty acids, free long-chain fatty-acids and long-chain fatty acyl-CoA esters, arachidonic acid being the most effective activator. HSP90A and probably RAC1, GNA12 and GNA13 can also release the autoinhibition by the TPR repeat. Activation by RAC1, GNA12 and GNA13 is synergistic with the one produced by fatty acids binding. Inhibited by okadaic acid.</text>
</comment>
<comment type="subunit">
    <text evidence="2 5 8 10">Probably forms a complex composed of chaperones HSP90 and HSP70, co-chaperones STIP1/HOP, CDC37, PPP5C, PTGES3/p23, TSC1 and client protein TSC2 (By similarity). Probably forms a complex composed of chaperones HSP90 and HSP70, co-chaperones CDC37, PPP5C, TSC1 and client protein TSC2, CDK4, AKT, RAF1 and NR3C1; this complex does not contain co-chaperones STIP1/HOP and PTGES3/p23 (By similarity). Part of a complex with HSP90/HSP90AA1 and steroid receptors (PubMed:9195923). Interacts (via TPR repeats) with HSP90AA1 (via TPR repeat-binding motif) or HSPA1A/HSPA1B; the interaction is direct and activates the phosphatase activity (By similarity). Dissociates from HSPA1A/HSPA1B and HSP90AA1 in response to arachidonic acid (By similarity). Interacts with CPNE1 (via VWFA domain) (PubMed:12522145). Interacts with CDC16, CDC27 (By similarity). Interacts with KLHDC10 (via the 6 Kelch repeats); inhibits the phosphatase activity on MAP3K5 (By similarity). Interacts with ATM and ATR; both interactions are induced by DNA damage and enhance ATM and ATR kinase activity (By similarity). Interacts with RAD17; reduced by DNA damage (By similarity). Interacts with nuclear receptors such as NR3C1/GCR and PPARG (activated by agonist); regulates their transactivation activities (PubMed:21994940, PubMed:9195923). Interacts (via TPR repeats) with S100 proteins S100A1, S100A2, S100A6, S100B and S100P; the interactions are calcium-dependent, strongly activate PPP5C phosphatase activity and compete with HSP90AA1 and MAP3K5 interactions (By similarity). Interacts with SMAD2 and SMAD3 but not with SMAD1; decreases SMAD3 phosphorylation and protein levels (By similarity). Interacts (via TPR repeats) with CRY1 and CRY2; the interaction with CRY2 down-regulates the phosphatase activity on CSNK1E (By similarity). Interacts (via TPR repeats) with the active form of RAC1, GNA12 or GNA13; these interactions activate the phosphatase activity and translocate PPP5C to the cell membrane (By similarity). Interacts with FLCN (By similarity).</text>
</comment>
<comment type="subcellular location">
    <subcellularLocation>
        <location evidence="8">Nucleus</location>
    </subcellularLocation>
    <subcellularLocation>
        <location evidence="8">Cytoplasm</location>
    </subcellularLocation>
    <subcellularLocation>
        <location evidence="2">Cell membrane</location>
    </subcellularLocation>
    <text evidence="2">Predominantly nuclear. But also present in the cytoplasm. Translocates from the cytoplasm to the plasma membrane in a RAC1-dependent manner.</text>
</comment>
<comment type="tissue specificity">
    <text evidence="6">Expressed in liver (at protein level) and brain, enriched in suprachiasmatic nuclei.</text>
</comment>
<comment type="induction">
    <text evidence="6">Does not show circadian oscillation.</text>
</comment>
<comment type="PTM">
    <text evidence="1">Activated by at least two different proteolytic cleavages producing a 56 kDa and a 50 kDa form.</text>
</comment>
<comment type="disruption phenotype">
    <text evidence="7 9">Animals are fertile with a growth rate equivalent to that of wild-type. Males weigh less, exhibit reduced fasting glycaemia and improved glucose tolerance, but retain normal insulin sensitivity.</text>
</comment>
<comment type="similarity">
    <text evidence="11">Belongs to the PPP phosphatase family. PP-5 (PP-T) subfamily.</text>
</comment>
<feature type="initiator methionine" description="Removed" evidence="2">
    <location>
        <position position="1"/>
    </location>
</feature>
<feature type="chain" id="PRO_0000058895" description="Serine/threonine-protein phosphatase 5">
    <location>
        <begin position="2"/>
        <end position="499"/>
    </location>
</feature>
<feature type="repeat" description="TPR 1">
    <location>
        <begin position="28"/>
        <end position="61"/>
    </location>
</feature>
<feature type="repeat" description="TPR 2">
    <location>
        <begin position="62"/>
        <end position="95"/>
    </location>
</feature>
<feature type="repeat" description="TPR 3">
    <location>
        <begin position="96"/>
        <end position="129"/>
    </location>
</feature>
<feature type="region of interest" description="Disordered" evidence="4">
    <location>
        <begin position="1"/>
        <end position="24"/>
    </location>
</feature>
<feature type="region of interest" description="Catalytic">
    <location>
        <begin position="184"/>
        <end position="499"/>
    </location>
</feature>
<feature type="region of interest" description="Required for autoinhibition" evidence="3">
    <location>
        <begin position="495"/>
        <end position="499"/>
    </location>
</feature>
<feature type="active site" description="Proton donor/acceptor" evidence="2">
    <location>
        <position position="304"/>
    </location>
</feature>
<feature type="binding site" evidence="2">
    <location>
        <position position="242"/>
    </location>
    <ligand>
        <name>Mn(2+)</name>
        <dbReference type="ChEBI" id="CHEBI:29035"/>
        <label>1</label>
    </ligand>
</feature>
<feature type="binding site" evidence="2">
    <location>
        <position position="244"/>
    </location>
    <ligand>
        <name>Mn(2+)</name>
        <dbReference type="ChEBI" id="CHEBI:29035"/>
        <label>1</label>
    </ligand>
</feature>
<feature type="binding site" evidence="2">
    <location>
        <position position="244"/>
    </location>
    <ligand>
        <name>substrate</name>
    </ligand>
</feature>
<feature type="binding site" evidence="2">
    <location>
        <position position="271"/>
    </location>
    <ligand>
        <name>Mn(2+)</name>
        <dbReference type="ChEBI" id="CHEBI:29035"/>
        <label>1</label>
    </ligand>
</feature>
<feature type="binding site" evidence="2">
    <location>
        <position position="271"/>
    </location>
    <ligand>
        <name>Mn(2+)</name>
        <dbReference type="ChEBI" id="CHEBI:29035"/>
        <label>2</label>
    </ligand>
</feature>
<feature type="binding site" evidence="2">
    <location>
        <position position="275"/>
    </location>
    <ligand>
        <name>substrate</name>
    </ligand>
</feature>
<feature type="binding site" evidence="2">
    <location>
        <begin position="303"/>
        <end position="304"/>
    </location>
    <ligand>
        <name>substrate</name>
    </ligand>
</feature>
<feature type="binding site" evidence="2">
    <location>
        <position position="303"/>
    </location>
    <ligand>
        <name>Mn(2+)</name>
        <dbReference type="ChEBI" id="CHEBI:29035"/>
        <label>2</label>
    </ligand>
</feature>
<feature type="binding site" evidence="2">
    <location>
        <position position="352"/>
    </location>
    <ligand>
        <name>Mn(2+)</name>
        <dbReference type="ChEBI" id="CHEBI:29035"/>
        <label>2</label>
    </ligand>
</feature>
<feature type="binding site" evidence="2">
    <location>
        <position position="400"/>
    </location>
    <ligand>
        <name>substrate</name>
    </ligand>
</feature>
<feature type="binding site" evidence="2">
    <location>
        <position position="427"/>
    </location>
    <ligand>
        <name>Mn(2+)</name>
        <dbReference type="ChEBI" id="CHEBI:29035"/>
        <label>2</label>
    </ligand>
</feature>
<feature type="binding site" evidence="2">
    <location>
        <position position="427"/>
    </location>
    <ligand>
        <name>substrate</name>
    </ligand>
</feature>
<feature type="modified residue" description="N-acetylalanine" evidence="2">
    <location>
        <position position="2"/>
    </location>
</feature>
<feature type="sequence conflict" description="In Ref. 1; AAB70573 and 4; AAH03744." evidence="11" ref="1 4">
    <original>T</original>
    <variation>A</variation>
    <location>
        <position position="24"/>
    </location>
</feature>
<feature type="sequence conflict" description="In Ref. 5; AAB18613." evidence="11" ref="5">
    <original>D</original>
    <variation>G</variation>
    <location>
        <position position="155"/>
    </location>
</feature>
<protein>
    <recommendedName>
        <fullName>Serine/threonine-protein phosphatase 5</fullName>
        <shortName>PP5</shortName>
        <ecNumber evidence="8">3.1.3.16</ecNumber>
    </recommendedName>
    <alternativeName>
        <fullName>Protein phosphatase T</fullName>
        <shortName>PPT</shortName>
    </alternativeName>
</protein>
<name>PPP5_MOUSE</name>
<dbReference type="EC" id="3.1.3.16" evidence="8"/>
<dbReference type="EMBL" id="AF018262">
    <property type="protein sequence ID" value="AAB70573.1"/>
    <property type="molecule type" value="mRNA"/>
</dbReference>
<dbReference type="EMBL" id="AC148976">
    <property type="status" value="NOT_ANNOTATED_CDS"/>
    <property type="molecule type" value="Genomic_DNA"/>
</dbReference>
<dbReference type="EMBL" id="CH466654">
    <property type="protein sequence ID" value="EDL42060.1"/>
    <property type="molecule type" value="Genomic_DNA"/>
</dbReference>
<dbReference type="EMBL" id="BC003744">
    <property type="protein sequence ID" value="AAH03744.1"/>
    <property type="molecule type" value="mRNA"/>
</dbReference>
<dbReference type="EMBL" id="U12204">
    <property type="protein sequence ID" value="AAB18613.1"/>
    <property type="molecule type" value="mRNA"/>
</dbReference>
<dbReference type="CCDS" id="CCDS20859.1"/>
<dbReference type="RefSeq" id="NP_035285.2">
    <property type="nucleotide sequence ID" value="NM_011155.3"/>
</dbReference>
<dbReference type="SMR" id="Q60676"/>
<dbReference type="BioGRID" id="202349">
    <property type="interactions" value="114"/>
</dbReference>
<dbReference type="FunCoup" id="Q60676">
    <property type="interactions" value="3573"/>
</dbReference>
<dbReference type="IntAct" id="Q60676">
    <property type="interactions" value="2"/>
</dbReference>
<dbReference type="MINT" id="Q60676"/>
<dbReference type="STRING" id="10090.ENSMUSP00000003183"/>
<dbReference type="iPTMnet" id="Q60676"/>
<dbReference type="PhosphoSitePlus" id="Q60676"/>
<dbReference type="SwissPalm" id="Q60676"/>
<dbReference type="jPOST" id="Q60676"/>
<dbReference type="PaxDb" id="10090-ENSMUSP00000003183"/>
<dbReference type="PeptideAtlas" id="Q60676"/>
<dbReference type="ProteomicsDB" id="289815"/>
<dbReference type="Pumba" id="Q60676"/>
<dbReference type="Antibodypedia" id="31446">
    <property type="antibodies" value="685 antibodies from 32 providers"/>
</dbReference>
<dbReference type="DNASU" id="19060"/>
<dbReference type="Ensembl" id="ENSMUST00000003183.12">
    <property type="protein sequence ID" value="ENSMUSP00000003183.6"/>
    <property type="gene ID" value="ENSMUSG00000003099.12"/>
</dbReference>
<dbReference type="GeneID" id="19060"/>
<dbReference type="KEGG" id="mmu:19060"/>
<dbReference type="UCSC" id="uc009fiq.2">
    <property type="organism name" value="mouse"/>
</dbReference>
<dbReference type="AGR" id="MGI:102666"/>
<dbReference type="CTD" id="5536"/>
<dbReference type="MGI" id="MGI:102666">
    <property type="gene designation" value="Ppp5c"/>
</dbReference>
<dbReference type="VEuPathDB" id="HostDB:ENSMUSG00000003099"/>
<dbReference type="eggNOG" id="KOG0376">
    <property type="taxonomic scope" value="Eukaryota"/>
</dbReference>
<dbReference type="GeneTree" id="ENSGT00940000158785"/>
<dbReference type="InParanoid" id="Q60676"/>
<dbReference type="OMA" id="IHKKYAF"/>
<dbReference type="OrthoDB" id="445564at2759"/>
<dbReference type="PhylomeDB" id="Q60676"/>
<dbReference type="TreeFam" id="TF105562"/>
<dbReference type="Reactome" id="R-MMU-5675221">
    <property type="pathway name" value="Negative regulation of MAPK pathway"/>
</dbReference>
<dbReference type="Reactome" id="R-MMU-5693565">
    <property type="pathway name" value="Recruitment and ATM-mediated phosphorylation of repair and signaling proteins at DNA double strand breaks"/>
</dbReference>
<dbReference type="Reactome" id="R-MMU-8939211">
    <property type="pathway name" value="ESR-mediated signaling"/>
</dbReference>
<dbReference type="BioGRID-ORCS" id="19060">
    <property type="hits" value="4 hits in 83 CRISPR screens"/>
</dbReference>
<dbReference type="ChiTaRS" id="Ppp5c">
    <property type="organism name" value="mouse"/>
</dbReference>
<dbReference type="PRO" id="PR:Q60676"/>
<dbReference type="Proteomes" id="UP000000589">
    <property type="component" value="Chromosome 7"/>
</dbReference>
<dbReference type="RNAct" id="Q60676">
    <property type="molecule type" value="protein"/>
</dbReference>
<dbReference type="Bgee" id="ENSMUSG00000003099">
    <property type="expression patterns" value="Expressed in retinal neural layer and 264 other cell types or tissues"/>
</dbReference>
<dbReference type="ExpressionAtlas" id="Q60676">
    <property type="expression patterns" value="baseline and differential"/>
</dbReference>
<dbReference type="GO" id="GO:0005829">
    <property type="term" value="C:cytosol"/>
    <property type="evidence" value="ECO:0000314"/>
    <property type="project" value="MGI"/>
</dbReference>
<dbReference type="GO" id="GO:0005634">
    <property type="term" value="C:nucleus"/>
    <property type="evidence" value="ECO:0007669"/>
    <property type="project" value="UniProtKB-SubCell"/>
</dbReference>
<dbReference type="GO" id="GO:0043204">
    <property type="term" value="C:perikaryon"/>
    <property type="evidence" value="ECO:0007669"/>
    <property type="project" value="Ensembl"/>
</dbReference>
<dbReference type="GO" id="GO:0005886">
    <property type="term" value="C:plasma membrane"/>
    <property type="evidence" value="ECO:0007669"/>
    <property type="project" value="UniProtKB-SubCell"/>
</dbReference>
<dbReference type="GO" id="GO:0101031">
    <property type="term" value="C:protein folding chaperone complex"/>
    <property type="evidence" value="ECO:0007669"/>
    <property type="project" value="Ensembl"/>
</dbReference>
<dbReference type="GO" id="GO:0032991">
    <property type="term" value="C:protein-containing complex"/>
    <property type="evidence" value="ECO:0000266"/>
    <property type="project" value="MGI"/>
</dbReference>
<dbReference type="GO" id="GO:1990635">
    <property type="term" value="C:proximal dendrite"/>
    <property type="evidence" value="ECO:0007669"/>
    <property type="project" value="Ensembl"/>
</dbReference>
<dbReference type="GO" id="GO:0043531">
    <property type="term" value="F:ADP binding"/>
    <property type="evidence" value="ECO:0000266"/>
    <property type="project" value="MGI"/>
</dbReference>
<dbReference type="GO" id="GO:0005524">
    <property type="term" value="F:ATP binding"/>
    <property type="evidence" value="ECO:0000266"/>
    <property type="project" value="MGI"/>
</dbReference>
<dbReference type="GO" id="GO:0001965">
    <property type="term" value="F:G-protein alpha-subunit binding"/>
    <property type="evidence" value="ECO:0007669"/>
    <property type="project" value="Ensembl"/>
</dbReference>
<dbReference type="GO" id="GO:0030544">
    <property type="term" value="F:Hsp70 protein binding"/>
    <property type="evidence" value="ECO:0007669"/>
    <property type="project" value="Ensembl"/>
</dbReference>
<dbReference type="GO" id="GO:0051879">
    <property type="term" value="F:Hsp90 protein binding"/>
    <property type="evidence" value="ECO:0007669"/>
    <property type="project" value="Ensembl"/>
</dbReference>
<dbReference type="GO" id="GO:0042802">
    <property type="term" value="F:identical protein binding"/>
    <property type="evidence" value="ECO:0007669"/>
    <property type="project" value="Ensembl"/>
</dbReference>
<dbReference type="GO" id="GO:0046872">
    <property type="term" value="F:metal ion binding"/>
    <property type="evidence" value="ECO:0007669"/>
    <property type="project" value="UniProtKB-KW"/>
</dbReference>
<dbReference type="GO" id="GO:0008017">
    <property type="term" value="F:microtubule binding"/>
    <property type="evidence" value="ECO:0007669"/>
    <property type="project" value="Ensembl"/>
</dbReference>
<dbReference type="GO" id="GO:0031435">
    <property type="term" value="F:mitogen-activated protein kinase kinase kinase binding"/>
    <property type="evidence" value="ECO:0007669"/>
    <property type="project" value="Ensembl"/>
</dbReference>
<dbReference type="GO" id="GO:0004721">
    <property type="term" value="F:phosphoprotein phosphatase activity"/>
    <property type="evidence" value="ECO:0000315"/>
    <property type="project" value="MGI"/>
</dbReference>
<dbReference type="GO" id="GO:0030291">
    <property type="term" value="F:protein serine/threonine kinase inhibitor activity"/>
    <property type="evidence" value="ECO:0007669"/>
    <property type="project" value="Ensembl"/>
</dbReference>
<dbReference type="GO" id="GO:0004722">
    <property type="term" value="F:protein serine/threonine phosphatase activity"/>
    <property type="evidence" value="ECO:0000250"/>
    <property type="project" value="UniProtKB"/>
</dbReference>
<dbReference type="GO" id="GO:0044877">
    <property type="term" value="F:protein-containing complex binding"/>
    <property type="evidence" value="ECO:0007669"/>
    <property type="project" value="Ensembl"/>
</dbReference>
<dbReference type="GO" id="GO:0003723">
    <property type="term" value="F:RNA binding"/>
    <property type="evidence" value="ECO:0000314"/>
    <property type="project" value="MGI"/>
</dbReference>
<dbReference type="GO" id="GO:0071276">
    <property type="term" value="P:cellular response to cadmium ion"/>
    <property type="evidence" value="ECO:0007669"/>
    <property type="project" value="Ensembl"/>
</dbReference>
<dbReference type="GO" id="GO:0070301">
    <property type="term" value="P:cellular response to hydrogen peroxide"/>
    <property type="evidence" value="ECO:0007669"/>
    <property type="project" value="Ensembl"/>
</dbReference>
<dbReference type="GO" id="GO:0043066">
    <property type="term" value="P:negative regulation of apoptotic process"/>
    <property type="evidence" value="ECO:0007669"/>
    <property type="project" value="Ensembl"/>
</dbReference>
<dbReference type="GO" id="GO:0043409">
    <property type="term" value="P:negative regulation of MAPK cascade"/>
    <property type="evidence" value="ECO:0007669"/>
    <property type="project" value="Ensembl"/>
</dbReference>
<dbReference type="GO" id="GO:0070262">
    <property type="term" value="P:peptidyl-serine dephosphorylation"/>
    <property type="evidence" value="ECO:0000250"/>
    <property type="project" value="UniProtKB"/>
</dbReference>
<dbReference type="GO" id="GO:2000324">
    <property type="term" value="P:positive regulation of nuclear receptor-mediated glucocorticoid signaling pathway"/>
    <property type="evidence" value="ECO:0007669"/>
    <property type="project" value="Ensembl"/>
</dbReference>
<dbReference type="GO" id="GO:1904550">
    <property type="term" value="P:response to arachidonate"/>
    <property type="evidence" value="ECO:0007669"/>
    <property type="project" value="Ensembl"/>
</dbReference>
<dbReference type="GO" id="GO:0010288">
    <property type="term" value="P:response to lead ion"/>
    <property type="evidence" value="ECO:0007669"/>
    <property type="project" value="Ensembl"/>
</dbReference>
<dbReference type="GO" id="GO:0043278">
    <property type="term" value="P:response to morphine"/>
    <property type="evidence" value="ECO:0000315"/>
    <property type="project" value="MGI"/>
</dbReference>
<dbReference type="CDD" id="cd07417">
    <property type="entry name" value="MPP_PP5_C"/>
    <property type="match status" value="1"/>
</dbReference>
<dbReference type="FunFam" id="1.25.40.10:FF:000055">
    <property type="entry name" value="Serine/threonine-protein phosphatase"/>
    <property type="match status" value="1"/>
</dbReference>
<dbReference type="FunFam" id="3.60.21.10:FF:000017">
    <property type="entry name" value="Serine/threonine-protein phosphatase"/>
    <property type="match status" value="1"/>
</dbReference>
<dbReference type="Gene3D" id="3.60.21.10">
    <property type="match status" value="1"/>
</dbReference>
<dbReference type="Gene3D" id="1.25.40.10">
    <property type="entry name" value="Tetratricopeptide repeat domain"/>
    <property type="match status" value="1"/>
</dbReference>
<dbReference type="InterPro" id="IPR004843">
    <property type="entry name" value="Calcineurin-like_PHP_ApaH"/>
</dbReference>
<dbReference type="InterPro" id="IPR029052">
    <property type="entry name" value="Metallo-depent_PP-like"/>
</dbReference>
<dbReference type="InterPro" id="IPR041753">
    <property type="entry name" value="PP5_C"/>
</dbReference>
<dbReference type="InterPro" id="IPR013235">
    <property type="entry name" value="PPP_dom"/>
</dbReference>
<dbReference type="InterPro" id="IPR051134">
    <property type="entry name" value="PPP_phosphatase"/>
</dbReference>
<dbReference type="InterPro" id="IPR006186">
    <property type="entry name" value="Ser/Thr-sp_prot-phosphatase"/>
</dbReference>
<dbReference type="InterPro" id="IPR011990">
    <property type="entry name" value="TPR-like_helical_dom_sf"/>
</dbReference>
<dbReference type="InterPro" id="IPR019734">
    <property type="entry name" value="TPR_rpt"/>
</dbReference>
<dbReference type="PANTHER" id="PTHR45668">
    <property type="entry name" value="SERINE/THREONINE-PROTEIN PHOSPHATASE 5-RELATED"/>
    <property type="match status" value="1"/>
</dbReference>
<dbReference type="PANTHER" id="PTHR45668:SF5">
    <property type="entry name" value="SERINE_THREONINE-PROTEIN PHOSPHATASE 5"/>
    <property type="match status" value="1"/>
</dbReference>
<dbReference type="Pfam" id="PF00149">
    <property type="entry name" value="Metallophos"/>
    <property type="match status" value="1"/>
</dbReference>
<dbReference type="Pfam" id="PF08321">
    <property type="entry name" value="PPP5"/>
    <property type="match status" value="1"/>
</dbReference>
<dbReference type="Pfam" id="PF00515">
    <property type="entry name" value="TPR_1"/>
    <property type="match status" value="1"/>
</dbReference>
<dbReference type="PIRSF" id="PIRSF033096">
    <property type="entry name" value="PPPtase_5"/>
    <property type="match status" value="1"/>
</dbReference>
<dbReference type="PRINTS" id="PR00114">
    <property type="entry name" value="STPHPHTASE"/>
</dbReference>
<dbReference type="SMART" id="SM00156">
    <property type="entry name" value="PP2Ac"/>
    <property type="match status" value="1"/>
</dbReference>
<dbReference type="SMART" id="SM00028">
    <property type="entry name" value="TPR"/>
    <property type="match status" value="3"/>
</dbReference>
<dbReference type="SUPFAM" id="SSF56300">
    <property type="entry name" value="Metallo-dependent phosphatases"/>
    <property type="match status" value="1"/>
</dbReference>
<dbReference type="SUPFAM" id="SSF48452">
    <property type="entry name" value="TPR-like"/>
    <property type="match status" value="1"/>
</dbReference>
<dbReference type="PROSITE" id="PS00125">
    <property type="entry name" value="SER_THR_PHOSPHATASE"/>
    <property type="match status" value="1"/>
</dbReference>
<dbReference type="PROSITE" id="PS50005">
    <property type="entry name" value="TPR"/>
    <property type="match status" value="3"/>
</dbReference>
<dbReference type="PROSITE" id="PS50293">
    <property type="entry name" value="TPR_REGION"/>
    <property type="match status" value="1"/>
</dbReference>